<evidence type="ECO:0000255" key="1">
    <source>
        <dbReference type="HAMAP-Rule" id="MF_01554"/>
    </source>
</evidence>
<gene>
    <name evidence="1" type="primary">glmM</name>
    <name type="ordered locus">lwe2137</name>
</gene>
<sequence length="450" mass="48491">MGKYFGTDGVRGVANSELTPELAFRLGRMGGYVLTRHVGEHPRVLVARDTRISGEMLESALIAGLVSVGIEVMRLGVISTPGVAYLTKAQGASASVMISASHNPVDDNGIKFFGSDGFKLSDDQEEEIEQLLDTAEDTLPRPSGEGLGTVSDYFEGKQKYIQYLKQTIENDFNGYHIALDCANGATSGLATHLFADLDAEISSMGASPNGLNINDGVGSTHPEALAAFVLDKKADVGLAFDGDGDRVIAIDEIGQIVDGDKIMFICAKYLREQGLLNSNTIVSTVMSNLGFYKGLRELEIEDVQTAVGDRYVVEAMREGNYNLGGEQSGHIIFLDHNTTGDGLLSGIQLINVMKATGKKLSELASEMKTFPQKLENIRVSDKNHVTDNPKVSKVISEVEAEMAGNGRVLVRPSGTEPLVRVMVEAATKEETDEYCERISAVVRSEMALND</sequence>
<proteinExistence type="inferred from homology"/>
<name>GLMM_LISW6</name>
<dbReference type="EC" id="5.4.2.10" evidence="1"/>
<dbReference type="EMBL" id="AM263198">
    <property type="protein sequence ID" value="CAK21555.1"/>
    <property type="molecule type" value="Genomic_DNA"/>
</dbReference>
<dbReference type="RefSeq" id="WP_011702895.1">
    <property type="nucleotide sequence ID" value="NC_008555.1"/>
</dbReference>
<dbReference type="SMR" id="A0AKM3"/>
<dbReference type="STRING" id="386043.lwe2137"/>
<dbReference type="GeneID" id="61190037"/>
<dbReference type="KEGG" id="lwe:lwe2137"/>
<dbReference type="eggNOG" id="COG1109">
    <property type="taxonomic scope" value="Bacteria"/>
</dbReference>
<dbReference type="HOGENOM" id="CLU_016950_7_0_9"/>
<dbReference type="OrthoDB" id="9806956at2"/>
<dbReference type="Proteomes" id="UP000000779">
    <property type="component" value="Chromosome"/>
</dbReference>
<dbReference type="GO" id="GO:0005829">
    <property type="term" value="C:cytosol"/>
    <property type="evidence" value="ECO:0007669"/>
    <property type="project" value="TreeGrafter"/>
</dbReference>
<dbReference type="GO" id="GO:0000287">
    <property type="term" value="F:magnesium ion binding"/>
    <property type="evidence" value="ECO:0007669"/>
    <property type="project" value="UniProtKB-UniRule"/>
</dbReference>
<dbReference type="GO" id="GO:0008966">
    <property type="term" value="F:phosphoglucosamine mutase activity"/>
    <property type="evidence" value="ECO:0007669"/>
    <property type="project" value="UniProtKB-UniRule"/>
</dbReference>
<dbReference type="GO" id="GO:0004615">
    <property type="term" value="F:phosphomannomutase activity"/>
    <property type="evidence" value="ECO:0007669"/>
    <property type="project" value="TreeGrafter"/>
</dbReference>
<dbReference type="GO" id="GO:0005975">
    <property type="term" value="P:carbohydrate metabolic process"/>
    <property type="evidence" value="ECO:0007669"/>
    <property type="project" value="InterPro"/>
</dbReference>
<dbReference type="GO" id="GO:0009252">
    <property type="term" value="P:peptidoglycan biosynthetic process"/>
    <property type="evidence" value="ECO:0007669"/>
    <property type="project" value="TreeGrafter"/>
</dbReference>
<dbReference type="GO" id="GO:0006048">
    <property type="term" value="P:UDP-N-acetylglucosamine biosynthetic process"/>
    <property type="evidence" value="ECO:0007669"/>
    <property type="project" value="TreeGrafter"/>
</dbReference>
<dbReference type="CDD" id="cd05802">
    <property type="entry name" value="GlmM"/>
    <property type="match status" value="1"/>
</dbReference>
<dbReference type="FunFam" id="3.30.310.50:FF:000001">
    <property type="entry name" value="Phosphoglucosamine mutase"/>
    <property type="match status" value="1"/>
</dbReference>
<dbReference type="FunFam" id="3.40.120.10:FF:000001">
    <property type="entry name" value="Phosphoglucosamine mutase"/>
    <property type="match status" value="1"/>
</dbReference>
<dbReference type="FunFam" id="3.40.120.10:FF:000002">
    <property type="entry name" value="Phosphoglucosamine mutase"/>
    <property type="match status" value="1"/>
</dbReference>
<dbReference type="Gene3D" id="3.40.120.10">
    <property type="entry name" value="Alpha-D-Glucose-1,6-Bisphosphate, subunit A, domain 3"/>
    <property type="match status" value="3"/>
</dbReference>
<dbReference type="Gene3D" id="3.30.310.50">
    <property type="entry name" value="Alpha-D-phosphohexomutase, C-terminal domain"/>
    <property type="match status" value="1"/>
</dbReference>
<dbReference type="HAMAP" id="MF_01554_B">
    <property type="entry name" value="GlmM_B"/>
    <property type="match status" value="1"/>
</dbReference>
<dbReference type="InterPro" id="IPR005844">
    <property type="entry name" value="A-D-PHexomutase_a/b/a-I"/>
</dbReference>
<dbReference type="InterPro" id="IPR016055">
    <property type="entry name" value="A-D-PHexomutase_a/b/a-I/II/III"/>
</dbReference>
<dbReference type="InterPro" id="IPR005845">
    <property type="entry name" value="A-D-PHexomutase_a/b/a-II"/>
</dbReference>
<dbReference type="InterPro" id="IPR005846">
    <property type="entry name" value="A-D-PHexomutase_a/b/a-III"/>
</dbReference>
<dbReference type="InterPro" id="IPR005843">
    <property type="entry name" value="A-D-PHexomutase_C"/>
</dbReference>
<dbReference type="InterPro" id="IPR036900">
    <property type="entry name" value="A-D-PHexomutase_C_sf"/>
</dbReference>
<dbReference type="InterPro" id="IPR016066">
    <property type="entry name" value="A-D-PHexomutase_CS"/>
</dbReference>
<dbReference type="InterPro" id="IPR005841">
    <property type="entry name" value="Alpha-D-phosphohexomutase_SF"/>
</dbReference>
<dbReference type="InterPro" id="IPR018247">
    <property type="entry name" value="EF_Hand_1_Ca_BS"/>
</dbReference>
<dbReference type="InterPro" id="IPR006352">
    <property type="entry name" value="GlmM_bact"/>
</dbReference>
<dbReference type="InterPro" id="IPR050060">
    <property type="entry name" value="Phosphoglucosamine_mutase"/>
</dbReference>
<dbReference type="NCBIfam" id="TIGR01455">
    <property type="entry name" value="glmM"/>
    <property type="match status" value="1"/>
</dbReference>
<dbReference type="NCBIfam" id="NF008139">
    <property type="entry name" value="PRK10887.1"/>
    <property type="match status" value="1"/>
</dbReference>
<dbReference type="PANTHER" id="PTHR42946:SF1">
    <property type="entry name" value="PHOSPHOGLUCOMUTASE (ALPHA-D-GLUCOSE-1,6-BISPHOSPHATE-DEPENDENT)"/>
    <property type="match status" value="1"/>
</dbReference>
<dbReference type="PANTHER" id="PTHR42946">
    <property type="entry name" value="PHOSPHOHEXOSE MUTASE"/>
    <property type="match status" value="1"/>
</dbReference>
<dbReference type="Pfam" id="PF02878">
    <property type="entry name" value="PGM_PMM_I"/>
    <property type="match status" value="1"/>
</dbReference>
<dbReference type="Pfam" id="PF02879">
    <property type="entry name" value="PGM_PMM_II"/>
    <property type="match status" value="1"/>
</dbReference>
<dbReference type="Pfam" id="PF02880">
    <property type="entry name" value="PGM_PMM_III"/>
    <property type="match status" value="1"/>
</dbReference>
<dbReference type="Pfam" id="PF00408">
    <property type="entry name" value="PGM_PMM_IV"/>
    <property type="match status" value="1"/>
</dbReference>
<dbReference type="PRINTS" id="PR00509">
    <property type="entry name" value="PGMPMM"/>
</dbReference>
<dbReference type="SUPFAM" id="SSF55957">
    <property type="entry name" value="Phosphoglucomutase, C-terminal domain"/>
    <property type="match status" value="1"/>
</dbReference>
<dbReference type="SUPFAM" id="SSF53738">
    <property type="entry name" value="Phosphoglucomutase, first 3 domains"/>
    <property type="match status" value="3"/>
</dbReference>
<dbReference type="PROSITE" id="PS00710">
    <property type="entry name" value="PGM_PMM"/>
    <property type="match status" value="1"/>
</dbReference>
<feature type="chain" id="PRO_0000305650" description="Phosphoglucosamine mutase">
    <location>
        <begin position="1"/>
        <end position="450"/>
    </location>
</feature>
<feature type="active site" description="Phosphoserine intermediate" evidence="1">
    <location>
        <position position="101"/>
    </location>
</feature>
<feature type="binding site" description="via phosphate group" evidence="1">
    <location>
        <position position="101"/>
    </location>
    <ligand>
        <name>Mg(2+)</name>
        <dbReference type="ChEBI" id="CHEBI:18420"/>
    </ligand>
</feature>
<feature type="binding site" evidence="1">
    <location>
        <position position="241"/>
    </location>
    <ligand>
        <name>Mg(2+)</name>
        <dbReference type="ChEBI" id="CHEBI:18420"/>
    </ligand>
</feature>
<feature type="binding site" evidence="1">
    <location>
        <position position="243"/>
    </location>
    <ligand>
        <name>Mg(2+)</name>
        <dbReference type="ChEBI" id="CHEBI:18420"/>
    </ligand>
</feature>
<feature type="binding site" evidence="1">
    <location>
        <position position="245"/>
    </location>
    <ligand>
        <name>Mg(2+)</name>
        <dbReference type="ChEBI" id="CHEBI:18420"/>
    </ligand>
</feature>
<feature type="modified residue" description="Phosphoserine" evidence="1">
    <location>
        <position position="101"/>
    </location>
</feature>
<accession>A0AKM3</accession>
<protein>
    <recommendedName>
        <fullName evidence="1">Phosphoglucosamine mutase</fullName>
        <ecNumber evidence="1">5.4.2.10</ecNumber>
    </recommendedName>
</protein>
<organism>
    <name type="scientific">Listeria welshimeri serovar 6b (strain ATCC 35897 / DSM 20650 / CCUG 15529 / CIP 8149 / NCTC 11857 / SLCC 5334 / V8)</name>
    <dbReference type="NCBI Taxonomy" id="386043"/>
    <lineage>
        <taxon>Bacteria</taxon>
        <taxon>Bacillati</taxon>
        <taxon>Bacillota</taxon>
        <taxon>Bacilli</taxon>
        <taxon>Bacillales</taxon>
        <taxon>Listeriaceae</taxon>
        <taxon>Listeria</taxon>
    </lineage>
</organism>
<comment type="function">
    <text evidence="1">Catalyzes the conversion of glucosamine-6-phosphate to glucosamine-1-phosphate.</text>
</comment>
<comment type="catalytic activity">
    <reaction evidence="1">
        <text>alpha-D-glucosamine 1-phosphate = D-glucosamine 6-phosphate</text>
        <dbReference type="Rhea" id="RHEA:23424"/>
        <dbReference type="ChEBI" id="CHEBI:58516"/>
        <dbReference type="ChEBI" id="CHEBI:58725"/>
        <dbReference type="EC" id="5.4.2.10"/>
    </reaction>
</comment>
<comment type="cofactor">
    <cofactor evidence="1">
        <name>Mg(2+)</name>
        <dbReference type="ChEBI" id="CHEBI:18420"/>
    </cofactor>
    <text evidence="1">Binds 1 Mg(2+) ion per subunit.</text>
</comment>
<comment type="PTM">
    <text evidence="1">Activated by phosphorylation.</text>
</comment>
<comment type="similarity">
    <text evidence="1">Belongs to the phosphohexose mutase family.</text>
</comment>
<keyword id="KW-0413">Isomerase</keyword>
<keyword id="KW-0460">Magnesium</keyword>
<keyword id="KW-0479">Metal-binding</keyword>
<keyword id="KW-0597">Phosphoprotein</keyword>
<reference key="1">
    <citation type="journal article" date="2006" name="J. Bacteriol.">
        <title>Whole-genome sequence of Listeria welshimeri reveals common steps in genome reduction with Listeria innocua as compared to Listeria monocytogenes.</title>
        <authorList>
            <person name="Hain T."/>
            <person name="Steinweg C."/>
            <person name="Kuenne C.T."/>
            <person name="Billion A."/>
            <person name="Ghai R."/>
            <person name="Chatterjee S.S."/>
            <person name="Domann E."/>
            <person name="Kaerst U."/>
            <person name="Goesmann A."/>
            <person name="Bekel T."/>
            <person name="Bartels D."/>
            <person name="Kaiser O."/>
            <person name="Meyer F."/>
            <person name="Puehler A."/>
            <person name="Weisshaar B."/>
            <person name="Wehland J."/>
            <person name="Liang C."/>
            <person name="Dandekar T."/>
            <person name="Lampidis R."/>
            <person name="Kreft J."/>
            <person name="Goebel W."/>
            <person name="Chakraborty T."/>
        </authorList>
    </citation>
    <scope>NUCLEOTIDE SEQUENCE [LARGE SCALE GENOMIC DNA]</scope>
    <source>
        <strain>ATCC 35897 / DSM 20650 / CCUG 15529 / CIP 8149 / NCTC 11857 / SLCC 5334 / V8</strain>
    </source>
</reference>